<gene>
    <name type="primary">QDR3</name>
    <name type="ordered locus">CAALFM_C601290CA</name>
    <name type="ORF">CaO19.136</name>
    <name type="ORF">CaO19.7780</name>
</gene>
<reference key="1">
    <citation type="journal article" date="2004" name="Proc. Natl. Acad. Sci. U.S.A.">
        <title>The diploid genome sequence of Candida albicans.</title>
        <authorList>
            <person name="Jones T."/>
            <person name="Federspiel N.A."/>
            <person name="Chibana H."/>
            <person name="Dungan J."/>
            <person name="Kalman S."/>
            <person name="Magee B.B."/>
            <person name="Newport G."/>
            <person name="Thorstenson Y.R."/>
            <person name="Agabian N."/>
            <person name="Magee P.T."/>
            <person name="Davis R.W."/>
            <person name="Scherer S."/>
        </authorList>
    </citation>
    <scope>NUCLEOTIDE SEQUENCE [LARGE SCALE GENOMIC DNA]</scope>
    <source>
        <strain>SC5314 / ATCC MYA-2876</strain>
    </source>
</reference>
<reference key="2">
    <citation type="journal article" date="2007" name="Genome Biol.">
        <title>Assembly of the Candida albicans genome into sixteen supercontigs aligned on the eight chromosomes.</title>
        <authorList>
            <person name="van het Hoog M."/>
            <person name="Rast T.J."/>
            <person name="Martchenko M."/>
            <person name="Grindle S."/>
            <person name="Dignard D."/>
            <person name="Hogues H."/>
            <person name="Cuomo C."/>
            <person name="Berriman M."/>
            <person name="Scherer S."/>
            <person name="Magee B.B."/>
            <person name="Whiteway M."/>
            <person name="Chibana H."/>
            <person name="Nantel A."/>
            <person name="Magee P.T."/>
        </authorList>
    </citation>
    <scope>GENOME REANNOTATION</scope>
    <source>
        <strain>SC5314 / ATCC MYA-2876</strain>
    </source>
</reference>
<reference key="3">
    <citation type="journal article" date="2013" name="Genome Biol.">
        <title>Assembly of a phased diploid Candida albicans genome facilitates allele-specific measurements and provides a simple model for repeat and indel structure.</title>
        <authorList>
            <person name="Muzzey D."/>
            <person name="Schwartz K."/>
            <person name="Weissman J.S."/>
            <person name="Sherlock G."/>
        </authorList>
    </citation>
    <scope>NUCLEOTIDE SEQUENCE [LARGE SCALE GENOMIC DNA]</scope>
    <scope>GENOME REANNOTATION</scope>
    <source>
        <strain>SC5314 / ATCC MYA-2876</strain>
    </source>
</reference>
<reference key="4">
    <citation type="journal article" date="2008" name="BMC Genomics">
        <title>MFS transportome of the human pathogenic yeast Candida albicans.</title>
        <authorList>
            <person name="Gaur M."/>
            <person name="Puri N."/>
            <person name="Manoharlal R."/>
            <person name="Rai V."/>
            <person name="Mukhopadhayay G."/>
            <person name="Choudhury D."/>
            <person name="Prasad R."/>
        </authorList>
    </citation>
    <scope>IDENTIFICATION</scope>
</reference>
<reference key="5">
    <citation type="journal article" date="2011" name="J. Biol. Chem.">
        <title>Cap2-HAP complex is a critical transcriptional regulator that has dual but contrasting roles in regulation of iron homeostasis in Candida albicans.</title>
        <authorList>
            <person name="Singh R.P."/>
            <person name="Prasad H.K."/>
            <person name="Sinha I."/>
            <person name="Agarwal N."/>
            <person name="Natarajan K."/>
        </authorList>
    </citation>
    <scope>INDUCTION</scope>
</reference>
<reference key="6">
    <citation type="journal article" date="2014" name="Biochem. J.">
        <title>Novel role of a family of major facilitator transporters in biofilm development and virulence of Candida albicans.</title>
        <authorList>
            <person name="Shah A.H."/>
            <person name="Singh A."/>
            <person name="Dhamgaye S."/>
            <person name="Chauhan N."/>
            <person name="Vandeputte P."/>
            <person name="Suneetha K.J."/>
            <person name="Kaur R."/>
            <person name="Mukherjee P.K."/>
            <person name="Chandra J."/>
            <person name="Ghannoum M.A."/>
            <person name="Sanglard D."/>
            <person name="Goswami S.K."/>
            <person name="Prasad R."/>
        </authorList>
    </citation>
    <scope>SUBCELLULAR LOCATION</scope>
    <scope>DISRUPTION PHENOTYPE</scope>
    <scope>FUNCTION</scope>
</reference>
<keyword id="KW-1003">Cell membrane</keyword>
<keyword id="KW-0325">Glycoprotein</keyword>
<keyword id="KW-0472">Membrane</keyword>
<keyword id="KW-1185">Reference proteome</keyword>
<keyword id="KW-0812">Transmembrane</keyword>
<keyword id="KW-1133">Transmembrane helix</keyword>
<keyword id="KW-0813">Transport</keyword>
<keyword id="KW-0843">Virulence</keyword>
<accession>Q59XM0</accession>
<accession>A0A1D8PPL8</accession>
<accession>Q59WR8</accession>
<proteinExistence type="evidence at transcript level"/>
<name>QDR3_CANAL</name>
<feature type="chain" id="PRO_0000431601" description="MFS antiporter QDR3">
    <location>
        <begin position="1"/>
        <end position="697"/>
    </location>
</feature>
<feature type="topological domain" description="Cytoplasmic" evidence="7">
    <location>
        <begin position="1"/>
        <end position="141"/>
    </location>
</feature>
<feature type="transmembrane region" description="Helical; Name=1" evidence="1">
    <location>
        <begin position="142"/>
        <end position="162"/>
    </location>
</feature>
<feature type="topological domain" description="Extracellular" evidence="7">
    <location>
        <begin position="163"/>
        <end position="180"/>
    </location>
</feature>
<feature type="transmembrane region" description="Helical; Name=2" evidence="1">
    <location>
        <begin position="181"/>
        <end position="201"/>
    </location>
</feature>
<feature type="topological domain" description="Cytoplasmic" evidence="7">
    <location>
        <begin position="202"/>
        <end position="215"/>
    </location>
</feature>
<feature type="transmembrane region" description="Helical; Name=3" evidence="1">
    <location>
        <begin position="216"/>
        <end position="236"/>
    </location>
</feature>
<feature type="topological domain" description="Extracellular" evidence="7">
    <location>
        <begin position="237"/>
        <end position="240"/>
    </location>
</feature>
<feature type="transmembrane region" description="Helical; Name=4" evidence="1">
    <location>
        <begin position="241"/>
        <end position="261"/>
    </location>
</feature>
<feature type="topological domain" description="Cytoplasmic" evidence="7">
    <location>
        <begin position="262"/>
        <end position="268"/>
    </location>
</feature>
<feature type="transmembrane region" description="Helical; Name=5" evidence="1">
    <location>
        <begin position="269"/>
        <end position="289"/>
    </location>
</feature>
<feature type="topological domain" description="Extracellular" evidence="7">
    <location>
        <begin position="290"/>
        <end position="296"/>
    </location>
</feature>
<feature type="transmembrane region" description="Helical; Name=6" evidence="1">
    <location>
        <begin position="297"/>
        <end position="317"/>
    </location>
</feature>
<feature type="topological domain" description="Cytoplasmic" evidence="7">
    <location>
        <begin position="318"/>
        <end position="485"/>
    </location>
</feature>
<feature type="transmembrane region" description="Helical; Name=7" evidence="1">
    <location>
        <begin position="486"/>
        <end position="506"/>
    </location>
</feature>
<feature type="topological domain" description="Extracellular" evidence="7">
    <location>
        <begin position="507"/>
        <end position="519"/>
    </location>
</feature>
<feature type="transmembrane region" description="Helical; Name=8" evidence="1">
    <location>
        <begin position="520"/>
        <end position="540"/>
    </location>
</feature>
<feature type="topological domain" description="Cytoplasmic" evidence="7">
    <location>
        <begin position="541"/>
        <end position="565"/>
    </location>
</feature>
<feature type="transmembrane region" description="Helical; Name=9" evidence="1">
    <location>
        <begin position="566"/>
        <end position="586"/>
    </location>
</feature>
<feature type="topological domain" description="Extracellular" evidence="7">
    <location>
        <begin position="587"/>
        <end position="590"/>
    </location>
</feature>
<feature type="transmembrane region" description="Helical; Name=10" evidence="1">
    <location>
        <begin position="591"/>
        <end position="611"/>
    </location>
</feature>
<feature type="topological domain" description="Cytoplasmic" evidence="7">
    <location>
        <begin position="612"/>
        <end position="626"/>
    </location>
</feature>
<feature type="transmembrane region" description="Helical; Name=11" evidence="1">
    <location>
        <begin position="627"/>
        <end position="647"/>
    </location>
</feature>
<feature type="topological domain" description="Extracellular" evidence="7">
    <location>
        <begin position="648"/>
        <end position="653"/>
    </location>
</feature>
<feature type="transmembrane region" description="Helical; Name=12" evidence="1">
    <location>
        <begin position="654"/>
        <end position="674"/>
    </location>
</feature>
<feature type="topological domain" description="Cytoplasmic" evidence="7">
    <location>
        <begin position="675"/>
        <end position="697"/>
    </location>
</feature>
<feature type="region of interest" description="Disordered" evidence="3">
    <location>
        <begin position="38"/>
        <end position="109"/>
    </location>
</feature>
<feature type="region of interest" description="Disordered" evidence="3">
    <location>
        <begin position="338"/>
        <end position="367"/>
    </location>
</feature>
<feature type="compositionally biased region" description="Low complexity" evidence="3">
    <location>
        <begin position="53"/>
        <end position="69"/>
    </location>
</feature>
<feature type="compositionally biased region" description="Low complexity" evidence="3">
    <location>
        <begin position="85"/>
        <end position="99"/>
    </location>
</feature>
<feature type="glycosylation site" description="N-linked (GlcNAc...) asparagine" evidence="2">
    <location>
        <position position="175"/>
    </location>
</feature>
<feature type="glycosylation site" description="N-linked (GlcNAc...) asparagine" evidence="2">
    <location>
        <position position="180"/>
    </location>
</feature>
<feature type="glycosylation site" description="N-linked (GlcNAc...) asparagine" evidence="2">
    <location>
        <position position="516"/>
    </location>
</feature>
<comment type="function">
    <text evidence="5 6">MFS antiporter that does not display functional linkage as drug transporter and performs functions that significantly affect biofilm development and virulence. No substrate for transport has been identified yet, but plays an important role in the growth in the host.</text>
</comment>
<comment type="subcellular location">
    <subcellularLocation>
        <location evidence="5">Cell membrane</location>
        <topology evidence="5">Multi-pass membrane protein</topology>
    </subcellularLocation>
    <text evidence="5">In contrast to QDR1 and QDR2, does not accumulate in membrane rafts and shows uniform distribution at the cell membrane.</text>
</comment>
<comment type="induction">
    <text evidence="4">Expression is repressed by HAP43.</text>
</comment>
<comment type="disruption phenotype">
    <text evidence="5">Leads to defects in biofilm architecture and attenuated virulence.</text>
</comment>
<comment type="similarity">
    <text evidence="7">Belongs to the major facilitator superfamily. CAR1 family.</text>
</comment>
<sequence>MSHSPNLSPQISNDIIDADTTSLASTETQQNIQHSQIHPIGHHGREQSEEPQNTTKTTTTTTNKIHTTTPSVDPDLGPLRELEQDLSSLESQQEQYLSQKPTSTSIKTNKVPLRERRGLLAQIVLIPEYEDARDYPNKIKYLIVFIIAFASLAGPFGTSVMLPAIDDIVNDLNTNVSTVNVSVGIYLLSLGIFPLWWSSFSERFGRRSVYMVSFTLFVAFSIGTALSPNIAALIVLRVLQGGSSASVQAVGAGTIADLFIPQERGQAMGLYYLGPLAGPFLAPILGGAVSQAWGWRATQWLLMIISACSFVLITFFLPETLRRVDTIQVAKDLMKKSDNNGSQNEKIHDDFAGADNSSVHDIDGNPIPGTELHQVVSNLSRRSSNARSIVTYMEEQENEGPIIDPVMPSISRLTTNRSAYSQRIHQNYVTDELRKTTSNLTQSNHSQYNNNNNNDNDKWSSVKTNCYDLIIRPLHSIILLKHPPVVLVISFSAISFAAIYFFNMAISYEYARSPYNFSSVILGLMYIPNSVTYFMASIIGGKWNDRLLNRYAQKHGELVPESRLSWNIVVAIILYPMACLIFGWTIKYREFWVIPLIGTALFGFASMLVIGATVTYLVDSLPGKGATGVALNNLIRQILAAIATFIVEPLLRAIGAGVLFSIIAGILLVSSLVLLYLKKRGAFFREHYDVMDLYAKL</sequence>
<organism>
    <name type="scientific">Candida albicans (strain SC5314 / ATCC MYA-2876)</name>
    <name type="common">Yeast</name>
    <dbReference type="NCBI Taxonomy" id="237561"/>
    <lineage>
        <taxon>Eukaryota</taxon>
        <taxon>Fungi</taxon>
        <taxon>Dikarya</taxon>
        <taxon>Ascomycota</taxon>
        <taxon>Saccharomycotina</taxon>
        <taxon>Pichiomycetes</taxon>
        <taxon>Debaryomycetaceae</taxon>
        <taxon>Candida/Lodderomyces clade</taxon>
        <taxon>Candida</taxon>
    </lineage>
</organism>
<dbReference type="EMBL" id="CP017628">
    <property type="protein sequence ID" value="AOW30070.1"/>
    <property type="molecule type" value="Genomic_DNA"/>
</dbReference>
<dbReference type="RefSeq" id="XP_714342.2">
    <property type="nucleotide sequence ID" value="XM_709249.2"/>
</dbReference>
<dbReference type="FunCoup" id="Q59XM0">
    <property type="interactions" value="25"/>
</dbReference>
<dbReference type="STRING" id="237561.Q59XM0"/>
<dbReference type="GlyCosmos" id="Q59XM0">
    <property type="glycosylation" value="3 sites, No reported glycans"/>
</dbReference>
<dbReference type="EnsemblFungi" id="C6_01290C_A-T">
    <property type="protein sequence ID" value="C6_01290C_A-T-p1"/>
    <property type="gene ID" value="C6_01290C_A"/>
</dbReference>
<dbReference type="GeneID" id="3644023"/>
<dbReference type="KEGG" id="cal:CAALFM_C601290CA"/>
<dbReference type="CGD" id="CAL0000174097">
    <property type="gene designation" value="QDR3"/>
</dbReference>
<dbReference type="VEuPathDB" id="FungiDB:C6_01290C_A"/>
<dbReference type="HOGENOM" id="CLU_008455_8_5_1"/>
<dbReference type="InParanoid" id="Q59XM0"/>
<dbReference type="OrthoDB" id="3936150at2759"/>
<dbReference type="PRO" id="PR:Q59XM0"/>
<dbReference type="Proteomes" id="UP000000559">
    <property type="component" value="Chromosome 6"/>
</dbReference>
<dbReference type="GO" id="GO:0005886">
    <property type="term" value="C:plasma membrane"/>
    <property type="evidence" value="ECO:0000318"/>
    <property type="project" value="GO_Central"/>
</dbReference>
<dbReference type="GO" id="GO:0015203">
    <property type="term" value="F:polyamine transmembrane transporter activity"/>
    <property type="evidence" value="ECO:0000318"/>
    <property type="project" value="GO_Central"/>
</dbReference>
<dbReference type="GO" id="GO:0015565">
    <property type="term" value="F:threonine efflux transmembrane transporter activity"/>
    <property type="evidence" value="ECO:0007669"/>
    <property type="project" value="EnsemblFungi"/>
</dbReference>
<dbReference type="GO" id="GO:0032973">
    <property type="term" value="P:amino acid export across plasma membrane"/>
    <property type="evidence" value="ECO:0007669"/>
    <property type="project" value="EnsemblFungi"/>
</dbReference>
<dbReference type="GO" id="GO:0030476">
    <property type="term" value="P:ascospore wall assembly"/>
    <property type="evidence" value="ECO:0007669"/>
    <property type="project" value="EnsemblFungi"/>
</dbReference>
<dbReference type="GO" id="GO:0010509">
    <property type="term" value="P:intracellular polyamine homeostasis"/>
    <property type="evidence" value="ECO:0000318"/>
    <property type="project" value="GO_Central"/>
</dbReference>
<dbReference type="GO" id="GO:0055088">
    <property type="term" value="P:lipid homeostasis"/>
    <property type="evidence" value="ECO:0000315"/>
    <property type="project" value="CGD"/>
</dbReference>
<dbReference type="GO" id="GO:0001765">
    <property type="term" value="P:membrane raft assembly"/>
    <property type="evidence" value="ECO:0000315"/>
    <property type="project" value="CGD"/>
</dbReference>
<dbReference type="GO" id="GO:0055085">
    <property type="term" value="P:transmembrane transport"/>
    <property type="evidence" value="ECO:0000318"/>
    <property type="project" value="GO_Central"/>
</dbReference>
<dbReference type="CDD" id="cd17323">
    <property type="entry name" value="MFS_Tpo1_MDR_like"/>
    <property type="match status" value="1"/>
</dbReference>
<dbReference type="FunFam" id="1.20.1720.10:FF:000009">
    <property type="entry name" value="MFS multidrug transporter"/>
    <property type="match status" value="1"/>
</dbReference>
<dbReference type="FunFam" id="1.20.1250.20:FF:000773">
    <property type="entry name" value="Quinidine resistance"/>
    <property type="match status" value="1"/>
</dbReference>
<dbReference type="Gene3D" id="1.20.1250.20">
    <property type="entry name" value="MFS general substrate transporter like domains"/>
    <property type="match status" value="1"/>
</dbReference>
<dbReference type="Gene3D" id="1.20.1720.10">
    <property type="entry name" value="Multidrug resistance protein D"/>
    <property type="match status" value="1"/>
</dbReference>
<dbReference type="InterPro" id="IPR011701">
    <property type="entry name" value="MFS"/>
</dbReference>
<dbReference type="InterPro" id="IPR020846">
    <property type="entry name" value="MFS_dom"/>
</dbReference>
<dbReference type="InterPro" id="IPR036259">
    <property type="entry name" value="MFS_trans_sf"/>
</dbReference>
<dbReference type="PANTHER" id="PTHR23502">
    <property type="entry name" value="MAJOR FACILITATOR SUPERFAMILY"/>
    <property type="match status" value="1"/>
</dbReference>
<dbReference type="PANTHER" id="PTHR23502:SF5">
    <property type="entry name" value="QUINIDINE RESISTANCE PROTEIN 3"/>
    <property type="match status" value="1"/>
</dbReference>
<dbReference type="Pfam" id="PF07690">
    <property type="entry name" value="MFS_1"/>
    <property type="match status" value="1"/>
</dbReference>
<dbReference type="SUPFAM" id="SSF103473">
    <property type="entry name" value="MFS general substrate transporter"/>
    <property type="match status" value="1"/>
</dbReference>
<dbReference type="PROSITE" id="PS50850">
    <property type="entry name" value="MFS"/>
    <property type="match status" value="1"/>
</dbReference>
<evidence type="ECO:0000255" key="1"/>
<evidence type="ECO:0000255" key="2">
    <source>
        <dbReference type="PROSITE-ProRule" id="PRU00498"/>
    </source>
</evidence>
<evidence type="ECO:0000256" key="3">
    <source>
        <dbReference type="SAM" id="MobiDB-lite"/>
    </source>
</evidence>
<evidence type="ECO:0000269" key="4">
    <source>
    </source>
</evidence>
<evidence type="ECO:0000269" key="5">
    <source>
    </source>
</evidence>
<evidence type="ECO:0000303" key="6">
    <source>
    </source>
</evidence>
<evidence type="ECO:0000305" key="7"/>
<protein>
    <recommendedName>
        <fullName evidence="7">MFS antiporter QDR3</fullName>
    </recommendedName>
</protein>